<reference key="1">
    <citation type="journal article" date="1999" name="Brain Res. Mol. Brain Res.">
        <title>Cloning and characterization of CRF, a novel C1q-related factor, expressed in areas of the brain involved in motor function.</title>
        <authorList>
            <person name="Berube N.G."/>
            <person name="Swanson X.H."/>
            <person name="Bertram M.J."/>
            <person name="Kittle J.D."/>
            <person name="Didenko V."/>
            <person name="Baskin D.S."/>
            <person name="Smith J.R."/>
            <person name="Pereira-Smith O.M."/>
        </authorList>
    </citation>
    <scope>NUCLEOTIDE SEQUENCE [MRNA]</scope>
</reference>
<reference key="2">
    <citation type="submission" date="2001-08" db="EMBL/GenBank/DDBJ databases">
        <authorList>
            <consortium name="SeattleSNPs variation discovery resource"/>
        </authorList>
    </citation>
    <scope>NUCLEOTIDE SEQUENCE [GENOMIC DNA]</scope>
</reference>
<reference key="3">
    <citation type="journal article" date="2004" name="Genome Res.">
        <title>The status, quality, and expansion of the NIH full-length cDNA project: the Mammalian Gene Collection (MGC).</title>
        <authorList>
            <consortium name="The MGC Project Team"/>
        </authorList>
    </citation>
    <scope>NUCLEOTIDE SEQUENCE [LARGE SCALE MRNA]</scope>
    <source>
        <tissue>Placenta</tissue>
    </source>
</reference>
<gene>
    <name type="primary">C1QL1</name>
    <name type="synonym">C1QRF</name>
    <name type="synonym">CRF</name>
    <name type="synonym">CTRP14</name>
</gene>
<accession>O75973</accession>
<protein>
    <recommendedName>
        <fullName>C1q-related factor</fullName>
    </recommendedName>
    <alternativeName>
        <fullName>C1q and tumor necrosis factor-related protein 14</fullName>
        <shortName>C1q/TNF-related protein 14</shortName>
    </alternativeName>
    <alternativeName>
        <fullName>Complement component 1 Q subcomponent-like 1</fullName>
    </alternativeName>
</protein>
<feature type="signal peptide" evidence="3">
    <location>
        <begin position="1"/>
        <end position="16"/>
    </location>
</feature>
<feature type="chain" id="PRO_0000003527" description="C1q-related factor">
    <location>
        <begin position="17"/>
        <end position="258"/>
    </location>
</feature>
<feature type="domain" description="Collagen-like">
    <location>
        <begin position="67"/>
        <end position="115"/>
    </location>
</feature>
<feature type="domain" description="C1q" evidence="4">
    <location>
        <begin position="125"/>
        <end position="258"/>
    </location>
</feature>
<feature type="region of interest" description="Disordered" evidence="5">
    <location>
        <begin position="39"/>
        <end position="117"/>
    </location>
</feature>
<feature type="compositionally biased region" description="Low complexity" evidence="5">
    <location>
        <begin position="67"/>
        <end position="77"/>
    </location>
</feature>
<feature type="compositionally biased region" description="Pro residues" evidence="5">
    <location>
        <begin position="78"/>
        <end position="95"/>
    </location>
</feature>
<organism>
    <name type="scientific">Homo sapiens</name>
    <name type="common">Human</name>
    <dbReference type="NCBI Taxonomy" id="9606"/>
    <lineage>
        <taxon>Eukaryota</taxon>
        <taxon>Metazoa</taxon>
        <taxon>Chordata</taxon>
        <taxon>Craniata</taxon>
        <taxon>Vertebrata</taxon>
        <taxon>Euteleostomi</taxon>
        <taxon>Mammalia</taxon>
        <taxon>Eutheria</taxon>
        <taxon>Euarchontoglires</taxon>
        <taxon>Primates</taxon>
        <taxon>Haplorrhini</taxon>
        <taxon>Catarrhini</taxon>
        <taxon>Hominidae</taxon>
        <taxon>Homo</taxon>
    </lineage>
</organism>
<comment type="function">
    <text evidence="1">May regulate the number of excitatory synapses that are formed on hippocampus neurons. Has no effect on inhibitory synapses (By similarity).</text>
</comment>
<comment type="subunit">
    <text evidence="2">Interacts with ADGRB3. Forms heterooligomers with C1QL4, when proteins are coexpressed; this interaction does not occur after secretion.</text>
</comment>
<comment type="interaction">
    <interactant intactId="EBI-10826419">
        <id>O75973</id>
    </interactant>
    <interactant intactId="EBI-10826404">
        <id>P60827</id>
        <label>C1QTNF8</label>
    </interactant>
    <organismsDiffer>false</organismsDiffer>
    <experiments>2</experiments>
</comment>
<comment type="subcellular location">
    <subcellularLocation>
        <location>Secreted</location>
    </subcellularLocation>
</comment>
<comment type="tissue specificity">
    <text>Expressed in brainstem.</text>
</comment>
<proteinExistence type="evidence at protein level"/>
<keyword id="KW-0176">Collagen</keyword>
<keyword id="KW-1267">Proteomics identification</keyword>
<keyword id="KW-1185">Reference proteome</keyword>
<keyword id="KW-0964">Secreted</keyword>
<keyword id="KW-0732">Signal</keyword>
<sequence length="258" mass="26453">MLLVLVVLIPVLVSSGGPEGHYEMLGTCRMVCDPYPARGPGAGARTDGGDALSEQSGAPPPSTLVQGPQGKPGRTGKPGPPGPPGDPGPPGPVGPPGEKGEPGKPGPPGLPGAGGSGAISTATYTTVPRVAFYAGLKNPHEGYEVLKFDDVVTNLGNNYDAASGKFTCNIPGTYFFTYHVLMRGGDGTSMWADLCKNGQVRASAIAQDADQNYDYASNSVILHLDAGDEVFIKLDGGKAHGGNSNKYSTFSGFIIYSD</sequence>
<name>C1QRF_HUMAN</name>
<evidence type="ECO:0000250" key="1"/>
<evidence type="ECO:0000250" key="2">
    <source>
        <dbReference type="UniProtKB" id="O88992"/>
    </source>
</evidence>
<evidence type="ECO:0000255" key="3"/>
<evidence type="ECO:0000255" key="4">
    <source>
        <dbReference type="PROSITE-ProRule" id="PRU00368"/>
    </source>
</evidence>
<evidence type="ECO:0000256" key="5">
    <source>
        <dbReference type="SAM" id="MobiDB-lite"/>
    </source>
</evidence>
<dbReference type="EMBL" id="AF095154">
    <property type="protein sequence ID" value="AAC64186.1"/>
    <property type="molecule type" value="mRNA"/>
</dbReference>
<dbReference type="EMBL" id="AF410771">
    <property type="protein sequence ID" value="AAK95248.1"/>
    <property type="molecule type" value="Genomic_DNA"/>
</dbReference>
<dbReference type="EMBL" id="BC008798">
    <property type="protein sequence ID" value="AAH08798.1"/>
    <property type="molecule type" value="mRNA"/>
</dbReference>
<dbReference type="CCDS" id="CCDS11492.1"/>
<dbReference type="RefSeq" id="NP_006679.1">
    <property type="nucleotide sequence ID" value="NM_006688.5"/>
</dbReference>
<dbReference type="SMR" id="O75973"/>
<dbReference type="BioGRID" id="116090">
    <property type="interactions" value="39"/>
</dbReference>
<dbReference type="FunCoup" id="O75973">
    <property type="interactions" value="321"/>
</dbReference>
<dbReference type="IntAct" id="O75973">
    <property type="interactions" value="41"/>
</dbReference>
<dbReference type="STRING" id="9606.ENSP00000253407"/>
<dbReference type="GlyGen" id="O75973">
    <property type="glycosylation" value="1 site, 1 O-linked glycan (1 site)"/>
</dbReference>
<dbReference type="iPTMnet" id="O75973"/>
<dbReference type="PhosphoSitePlus" id="O75973"/>
<dbReference type="BioMuta" id="C1QL1"/>
<dbReference type="MassIVE" id="O75973"/>
<dbReference type="PaxDb" id="9606-ENSP00000253407"/>
<dbReference type="PeptideAtlas" id="O75973"/>
<dbReference type="ProteomicsDB" id="50335"/>
<dbReference type="Antibodypedia" id="29941">
    <property type="antibodies" value="69 antibodies from 18 providers"/>
</dbReference>
<dbReference type="DNASU" id="10882"/>
<dbReference type="Ensembl" id="ENST00000253407.4">
    <property type="protein sequence ID" value="ENSP00000253407.2"/>
    <property type="gene ID" value="ENSG00000131094.5"/>
</dbReference>
<dbReference type="GeneID" id="10882"/>
<dbReference type="KEGG" id="hsa:10882"/>
<dbReference type="MANE-Select" id="ENST00000253407.4">
    <property type="protein sequence ID" value="ENSP00000253407.2"/>
    <property type="RefSeq nucleotide sequence ID" value="NM_006688.5"/>
    <property type="RefSeq protein sequence ID" value="NP_006679.1"/>
</dbReference>
<dbReference type="UCSC" id="uc002ihv.4">
    <property type="organism name" value="human"/>
</dbReference>
<dbReference type="AGR" id="HGNC:24182"/>
<dbReference type="CTD" id="10882"/>
<dbReference type="DisGeNET" id="10882"/>
<dbReference type="GeneCards" id="C1QL1"/>
<dbReference type="HGNC" id="HGNC:24182">
    <property type="gene designation" value="C1QL1"/>
</dbReference>
<dbReference type="HPA" id="ENSG00000131094">
    <property type="expression patterns" value="Tissue enhanced (brain, kidney)"/>
</dbReference>
<dbReference type="MIM" id="611586">
    <property type="type" value="gene"/>
</dbReference>
<dbReference type="neXtProt" id="NX_O75973"/>
<dbReference type="OpenTargets" id="ENSG00000131094"/>
<dbReference type="PharmGKB" id="PA134951551"/>
<dbReference type="VEuPathDB" id="HostDB:ENSG00000131094"/>
<dbReference type="eggNOG" id="ENOG502QSKV">
    <property type="taxonomic scope" value="Eukaryota"/>
</dbReference>
<dbReference type="GeneTree" id="ENSGT00940000162478"/>
<dbReference type="HOGENOM" id="CLU_001074_3_1_1"/>
<dbReference type="InParanoid" id="O75973"/>
<dbReference type="OMA" id="NYDGIAG"/>
<dbReference type="OrthoDB" id="10070467at2759"/>
<dbReference type="PAN-GO" id="O75973">
    <property type="GO annotations" value="1 GO annotation based on evolutionary models"/>
</dbReference>
<dbReference type="PhylomeDB" id="O75973"/>
<dbReference type="TreeFam" id="TF329591"/>
<dbReference type="PathwayCommons" id="O75973"/>
<dbReference type="SignaLink" id="O75973"/>
<dbReference type="BioGRID-ORCS" id="10882">
    <property type="hits" value="8 hits in 1144 CRISPR screens"/>
</dbReference>
<dbReference type="GeneWiki" id="C1QL1"/>
<dbReference type="GenomeRNAi" id="10882"/>
<dbReference type="Pharos" id="O75973">
    <property type="development level" value="Tdark"/>
</dbReference>
<dbReference type="PRO" id="PR:O75973"/>
<dbReference type="Proteomes" id="UP000005640">
    <property type="component" value="Chromosome 17"/>
</dbReference>
<dbReference type="RNAct" id="O75973">
    <property type="molecule type" value="protein"/>
</dbReference>
<dbReference type="Bgee" id="ENSG00000131094">
    <property type="expression patterns" value="Expressed in amygdala and 133 other cell types or tissues"/>
</dbReference>
<dbReference type="GO" id="GO:0150053">
    <property type="term" value="C:cerebellar climbing fiber to Purkinje cell synapse"/>
    <property type="evidence" value="ECO:0007669"/>
    <property type="project" value="Ensembl"/>
</dbReference>
<dbReference type="GO" id="GO:0044301">
    <property type="term" value="C:climbing fiber"/>
    <property type="evidence" value="ECO:0007669"/>
    <property type="project" value="Ensembl"/>
</dbReference>
<dbReference type="GO" id="GO:0005581">
    <property type="term" value="C:collagen trimer"/>
    <property type="evidence" value="ECO:0007669"/>
    <property type="project" value="UniProtKB-KW"/>
</dbReference>
<dbReference type="GO" id="GO:0005737">
    <property type="term" value="C:cytoplasm"/>
    <property type="evidence" value="ECO:0007669"/>
    <property type="project" value="Ensembl"/>
</dbReference>
<dbReference type="GO" id="GO:0098793">
    <property type="term" value="C:presynapse"/>
    <property type="evidence" value="ECO:0007669"/>
    <property type="project" value="Ensembl"/>
</dbReference>
<dbReference type="GO" id="GO:0043083">
    <property type="term" value="C:synaptic cleft"/>
    <property type="evidence" value="ECO:0007669"/>
    <property type="project" value="Ensembl"/>
</dbReference>
<dbReference type="GO" id="GO:0005102">
    <property type="term" value="F:signaling receptor binding"/>
    <property type="evidence" value="ECO:0007669"/>
    <property type="project" value="Ensembl"/>
</dbReference>
<dbReference type="GO" id="GO:0007626">
    <property type="term" value="P:locomotory behavior"/>
    <property type="evidence" value="ECO:0000303"/>
    <property type="project" value="UniProtKB"/>
</dbReference>
<dbReference type="GO" id="GO:0099558">
    <property type="term" value="P:maintenance of synapse structure"/>
    <property type="evidence" value="ECO:0007669"/>
    <property type="project" value="Ensembl"/>
</dbReference>
<dbReference type="GO" id="GO:0061743">
    <property type="term" value="P:motor learning"/>
    <property type="evidence" value="ECO:0007669"/>
    <property type="project" value="Ensembl"/>
</dbReference>
<dbReference type="GO" id="GO:0016322">
    <property type="term" value="P:neuron remodeling"/>
    <property type="evidence" value="ECO:0007669"/>
    <property type="project" value="Ensembl"/>
</dbReference>
<dbReference type="GO" id="GO:1905806">
    <property type="term" value="P:regulation of synapse pruning"/>
    <property type="evidence" value="ECO:0007669"/>
    <property type="project" value="Ensembl"/>
</dbReference>
<dbReference type="FunFam" id="2.60.120.40:FF:000001">
    <property type="entry name" value="Complement C1q B chain"/>
    <property type="match status" value="1"/>
</dbReference>
<dbReference type="Gene3D" id="2.60.120.40">
    <property type="match status" value="1"/>
</dbReference>
<dbReference type="InterPro" id="IPR001073">
    <property type="entry name" value="C1q_dom"/>
</dbReference>
<dbReference type="InterPro" id="IPR050822">
    <property type="entry name" value="Cerebellin_Synaptic_Org"/>
</dbReference>
<dbReference type="InterPro" id="IPR008160">
    <property type="entry name" value="Collagen"/>
</dbReference>
<dbReference type="InterPro" id="IPR008983">
    <property type="entry name" value="Tumour_necrosis_fac-like_dom"/>
</dbReference>
<dbReference type="PANTHER" id="PTHR22923:SF64">
    <property type="entry name" value="C1Q-RELATED FACTOR"/>
    <property type="match status" value="1"/>
</dbReference>
<dbReference type="PANTHER" id="PTHR22923">
    <property type="entry name" value="CEREBELLIN-RELATED"/>
    <property type="match status" value="1"/>
</dbReference>
<dbReference type="Pfam" id="PF00386">
    <property type="entry name" value="C1q"/>
    <property type="match status" value="1"/>
</dbReference>
<dbReference type="Pfam" id="PF01391">
    <property type="entry name" value="Collagen"/>
    <property type="match status" value="1"/>
</dbReference>
<dbReference type="PRINTS" id="PR00007">
    <property type="entry name" value="COMPLEMNTC1Q"/>
</dbReference>
<dbReference type="SMART" id="SM00110">
    <property type="entry name" value="C1Q"/>
    <property type="match status" value="1"/>
</dbReference>
<dbReference type="SUPFAM" id="SSF49842">
    <property type="entry name" value="TNF-like"/>
    <property type="match status" value="1"/>
</dbReference>
<dbReference type="PROSITE" id="PS50871">
    <property type="entry name" value="C1Q"/>
    <property type="match status" value="1"/>
</dbReference>